<protein>
    <recommendedName>
        <fullName>Acetylserotonin O-methyltransferase</fullName>
        <ecNumber evidence="2">2.1.1.4</ecNumber>
    </recommendedName>
    <alternativeName>
        <fullName>Hydroxyindole O-methyltransferase</fullName>
        <shortName>HIOMT</shortName>
    </alternativeName>
</protein>
<accession>Q8HZJ0</accession>
<organism>
    <name type="scientific">Macaca mulatta</name>
    <name type="common">Rhesus macaque</name>
    <dbReference type="NCBI Taxonomy" id="9544"/>
    <lineage>
        <taxon>Eukaryota</taxon>
        <taxon>Metazoa</taxon>
        <taxon>Chordata</taxon>
        <taxon>Craniata</taxon>
        <taxon>Vertebrata</taxon>
        <taxon>Euteleostomi</taxon>
        <taxon>Mammalia</taxon>
        <taxon>Eutheria</taxon>
        <taxon>Euarchontoglires</taxon>
        <taxon>Primates</taxon>
        <taxon>Haplorrhini</taxon>
        <taxon>Catarrhini</taxon>
        <taxon>Cercopithecidae</taxon>
        <taxon>Cercopithecinae</taxon>
        <taxon>Macaca</taxon>
    </lineage>
</organism>
<dbReference type="EC" id="2.1.1.4" evidence="2"/>
<dbReference type="EMBL" id="AY069924">
    <property type="protein sequence ID" value="AAL49966.1"/>
    <property type="molecule type" value="mRNA"/>
</dbReference>
<dbReference type="RefSeq" id="NP_001028112.1">
    <property type="nucleotide sequence ID" value="NM_001032940.1"/>
</dbReference>
<dbReference type="SMR" id="Q8HZJ0"/>
<dbReference type="FunCoup" id="Q8HZJ0">
    <property type="interactions" value="53"/>
</dbReference>
<dbReference type="STRING" id="9544.ENSMMUP00000080948"/>
<dbReference type="PaxDb" id="9544-ENSMMUP00000038234"/>
<dbReference type="GeneID" id="574350"/>
<dbReference type="KEGG" id="mcc:574350"/>
<dbReference type="CTD" id="438"/>
<dbReference type="eggNOG" id="KOG3178">
    <property type="taxonomic scope" value="Eukaryota"/>
</dbReference>
<dbReference type="HOGENOM" id="CLU_1953717_0_0_1"/>
<dbReference type="InParanoid" id="Q8HZJ0"/>
<dbReference type="OrthoDB" id="9533372at2759"/>
<dbReference type="UniPathway" id="UPA00837">
    <property type="reaction ID" value="UER00815"/>
</dbReference>
<dbReference type="Proteomes" id="UP000006718">
    <property type="component" value="Unassembled WGS sequence"/>
</dbReference>
<dbReference type="GO" id="GO:0017096">
    <property type="term" value="F:acetylserotonin O-methyltransferase activity"/>
    <property type="evidence" value="ECO:0000250"/>
    <property type="project" value="UniProtKB"/>
</dbReference>
<dbReference type="GO" id="GO:0046983">
    <property type="term" value="F:protein dimerization activity"/>
    <property type="evidence" value="ECO:0007669"/>
    <property type="project" value="InterPro"/>
</dbReference>
<dbReference type="GO" id="GO:0006629">
    <property type="term" value="P:lipid metabolic process"/>
    <property type="evidence" value="ECO:0007669"/>
    <property type="project" value="UniProtKB-KW"/>
</dbReference>
<dbReference type="GO" id="GO:0030187">
    <property type="term" value="P:melatonin biosynthetic process"/>
    <property type="evidence" value="ECO:0000250"/>
    <property type="project" value="UniProtKB"/>
</dbReference>
<dbReference type="GO" id="GO:0032259">
    <property type="term" value="P:methylation"/>
    <property type="evidence" value="ECO:0000318"/>
    <property type="project" value="GO_Central"/>
</dbReference>
<dbReference type="CDD" id="cd02440">
    <property type="entry name" value="AdoMet_MTases"/>
    <property type="match status" value="1"/>
</dbReference>
<dbReference type="FunFam" id="1.10.10.10:FF:000358">
    <property type="entry name" value="Acetylserotonin O-methyltransferase"/>
    <property type="match status" value="1"/>
</dbReference>
<dbReference type="FunFam" id="3.40.50.150:FF:000738">
    <property type="entry name" value="Acetylserotonin O-methyltransferase"/>
    <property type="match status" value="1"/>
</dbReference>
<dbReference type="Gene3D" id="3.40.50.150">
    <property type="entry name" value="Vaccinia Virus protein VP39"/>
    <property type="match status" value="1"/>
</dbReference>
<dbReference type="Gene3D" id="1.10.10.10">
    <property type="entry name" value="Winged helix-like DNA-binding domain superfamily/Winged helix DNA-binding domain"/>
    <property type="match status" value="1"/>
</dbReference>
<dbReference type="InterPro" id="IPR016461">
    <property type="entry name" value="COMT-like"/>
</dbReference>
<dbReference type="InterPro" id="IPR001077">
    <property type="entry name" value="O_MeTrfase_dom"/>
</dbReference>
<dbReference type="InterPro" id="IPR012967">
    <property type="entry name" value="Plant_O-MeTrfase_dimerisation"/>
</dbReference>
<dbReference type="InterPro" id="IPR029063">
    <property type="entry name" value="SAM-dependent_MTases_sf"/>
</dbReference>
<dbReference type="InterPro" id="IPR036388">
    <property type="entry name" value="WH-like_DNA-bd_sf"/>
</dbReference>
<dbReference type="InterPro" id="IPR036390">
    <property type="entry name" value="WH_DNA-bd_sf"/>
</dbReference>
<dbReference type="PANTHER" id="PTHR43712:SF2">
    <property type="entry name" value="O-METHYLTRANSFERASE CICE"/>
    <property type="match status" value="1"/>
</dbReference>
<dbReference type="PANTHER" id="PTHR43712">
    <property type="entry name" value="PUTATIVE (AFU_ORTHOLOGUE AFUA_4G14580)-RELATED"/>
    <property type="match status" value="1"/>
</dbReference>
<dbReference type="Pfam" id="PF08100">
    <property type="entry name" value="Dimerisation"/>
    <property type="match status" value="1"/>
</dbReference>
<dbReference type="Pfam" id="PF00891">
    <property type="entry name" value="Methyltransf_2"/>
    <property type="match status" value="1"/>
</dbReference>
<dbReference type="PIRSF" id="PIRSF005739">
    <property type="entry name" value="O-mtase"/>
    <property type="match status" value="1"/>
</dbReference>
<dbReference type="SUPFAM" id="SSF53335">
    <property type="entry name" value="S-adenosyl-L-methionine-dependent methyltransferases"/>
    <property type="match status" value="1"/>
</dbReference>
<dbReference type="SUPFAM" id="SSF46785">
    <property type="entry name" value="Winged helix' DNA-binding domain"/>
    <property type="match status" value="1"/>
</dbReference>
<dbReference type="PROSITE" id="PS51683">
    <property type="entry name" value="SAM_OMT_II"/>
    <property type="match status" value="1"/>
</dbReference>
<reference key="1">
    <citation type="journal article" date="2002" name="J. Clin. Endocrinol. Metab.">
        <title>Melatonin synthesis enzymes in Macaca mulatta: focus on arylalkylamine N-acetyltransferase (EC 2.3.1.87).</title>
        <authorList>
            <person name="Coon S.L."/>
            <person name="Del Olmo E."/>
            <person name="Young W.S. III"/>
            <person name="Klein D.C."/>
        </authorList>
    </citation>
    <scope>NUCLEOTIDE SEQUENCE [MRNA]</scope>
    <scope>TISSUE SPECIFICITY</scope>
    <scope>INDUCTION</scope>
    <source>
        <tissue>Pineal gland</tissue>
    </source>
</reference>
<comment type="function">
    <text evidence="2">Catalyzes the transfer of a methyl group onto N-acetylserotonin, producing melatonin (N-acetyl-5-methoxytryptamine).</text>
</comment>
<comment type="catalytic activity">
    <reaction evidence="2">
        <text>N-acetylserotonin + S-adenosyl-L-methionine = melatonin + S-adenosyl-L-homocysteine + H(+)</text>
        <dbReference type="Rhea" id="RHEA:15573"/>
        <dbReference type="ChEBI" id="CHEBI:15378"/>
        <dbReference type="ChEBI" id="CHEBI:16796"/>
        <dbReference type="ChEBI" id="CHEBI:17697"/>
        <dbReference type="ChEBI" id="CHEBI:57856"/>
        <dbReference type="ChEBI" id="CHEBI:59789"/>
        <dbReference type="EC" id="2.1.1.4"/>
    </reaction>
    <physiologicalReaction direction="left-to-right" evidence="2">
        <dbReference type="Rhea" id="RHEA:15574"/>
    </physiologicalReaction>
</comment>
<comment type="pathway">
    <text evidence="2">Aromatic compound metabolism; melatonin biosynthesis; melatonin from serotonin: step 1/2.</text>
</comment>
<comment type="subunit">
    <text evidence="1">Homodimer.</text>
</comment>
<comment type="tissue specificity">
    <text evidence="4">Highly expressed in pineal gland. In the retina, 10- to 100-fold lower expression compared to pineal gland, if any.</text>
</comment>
<comment type="induction">
    <text evidence="4">No night/day variations.</text>
</comment>
<comment type="similarity">
    <text evidence="3">Belongs to the class I-like SAM-binding methyltransferase superfamily. Cation-independent O-methyltransferase family.</text>
</comment>
<keyword id="KW-0443">Lipid metabolism</keyword>
<keyword id="KW-0471">Melatonin biosynthesis</keyword>
<keyword id="KW-0489">Methyltransferase</keyword>
<keyword id="KW-1185">Reference proteome</keyword>
<keyword id="KW-0949">S-adenosyl-L-methionine</keyword>
<keyword id="KW-0808">Transferase</keyword>
<feature type="chain" id="PRO_0000083983" description="Acetylserotonin O-methyltransferase">
    <location>
        <begin position="1"/>
        <end position="345"/>
    </location>
</feature>
<feature type="active site" description="Proton donor/acceptor" evidence="1">
    <location>
        <position position="255"/>
    </location>
</feature>
<feature type="binding site" evidence="3">
    <location>
        <position position="147"/>
    </location>
    <ligand>
        <name>S-adenosyl-L-methionine</name>
        <dbReference type="ChEBI" id="CHEBI:59789"/>
    </ligand>
</feature>
<feature type="binding site" evidence="3">
    <location>
        <position position="164"/>
    </location>
    <ligand>
        <name>S-adenosyl-L-methionine</name>
        <dbReference type="ChEBI" id="CHEBI:59789"/>
    </ligand>
</feature>
<feature type="binding site" evidence="3">
    <location>
        <position position="210"/>
    </location>
    <ligand>
        <name>S-adenosyl-L-methionine</name>
        <dbReference type="ChEBI" id="CHEBI:59789"/>
    </ligand>
</feature>
<feature type="binding site" evidence="3">
    <location>
        <begin position="235"/>
        <end position="237"/>
    </location>
    <ligand>
        <name>S-adenosyl-L-methionine</name>
        <dbReference type="ChEBI" id="CHEBI:59789"/>
    </ligand>
</feature>
<feature type="binding site" evidence="3">
    <location>
        <position position="252"/>
    </location>
    <ligand>
        <name>S-adenosyl-L-methionine</name>
        <dbReference type="ChEBI" id="CHEBI:59789"/>
    </ligand>
</feature>
<feature type="binding site" evidence="1">
    <location>
        <position position="256"/>
    </location>
    <ligand>
        <name>substrate</name>
    </ligand>
</feature>
<feature type="binding site" evidence="1">
    <location>
        <position position="302"/>
    </location>
    <ligand>
        <name>substrate</name>
    </ligand>
</feature>
<feature type="binding site" evidence="1">
    <location>
        <position position="306"/>
    </location>
    <ligand>
        <name>substrate</name>
    </ligand>
</feature>
<gene>
    <name type="primary">ASMT</name>
</gene>
<sequence length="345" mass="38160">MGSSGDDGYRLLNEYTNGFMVSQVLFAACELGVFDLLAEAPGPLDVAAVAAGVEASSHGTELLLDTCVSLKLLKVETRAGKAFYQNTELSSAYLTRVSPTSQCNLLKYMGRTSYGCWGHLADAVREGKNQYLQTFGVPAEDLFKAIYRSEGERLQFMQALQEVWSVNGRSVLTAFDLSGFPLMCDLGGGPGALAKECLSLYPGCKVTVFDVPEVVRTAKQHFSFPEEEEIHLQEGDFFKDPLPEADLYILARILHDWADGKCSHLLERVYHTCKPGGGILVIESLLDEDRRGPLLTQLYSLNMLVQTEGQERTPTHYHMLLSSAGFRDFQFKKTGAIYDAILVRK</sequence>
<proteinExistence type="evidence at transcript level"/>
<evidence type="ECO:0000250" key="1"/>
<evidence type="ECO:0000250" key="2">
    <source>
        <dbReference type="UniProtKB" id="B3GSH5"/>
    </source>
</evidence>
<evidence type="ECO:0000255" key="3">
    <source>
        <dbReference type="PROSITE-ProRule" id="PRU01020"/>
    </source>
</evidence>
<evidence type="ECO:0000269" key="4">
    <source>
    </source>
</evidence>
<name>ASMT_MACMU</name>